<organism>
    <name type="scientific">Stenotrophomonas maltophilia (strain K279a)</name>
    <dbReference type="NCBI Taxonomy" id="522373"/>
    <lineage>
        <taxon>Bacteria</taxon>
        <taxon>Pseudomonadati</taxon>
        <taxon>Pseudomonadota</taxon>
        <taxon>Gammaproteobacteria</taxon>
        <taxon>Lysobacterales</taxon>
        <taxon>Lysobacteraceae</taxon>
        <taxon>Stenotrophomonas</taxon>
        <taxon>Stenotrophomonas maltophilia group</taxon>
    </lineage>
</organism>
<feature type="chain" id="PRO_1000189246" description="Valine--tRNA ligase">
    <location>
        <begin position="1"/>
        <end position="942"/>
    </location>
</feature>
<feature type="coiled-coil region" evidence="1">
    <location>
        <begin position="876"/>
        <end position="942"/>
    </location>
</feature>
<feature type="short sequence motif" description="'HIGH' region">
    <location>
        <begin position="43"/>
        <end position="53"/>
    </location>
</feature>
<feature type="short sequence motif" description="'KMSKS' region">
    <location>
        <begin position="551"/>
        <end position="555"/>
    </location>
</feature>
<feature type="binding site" evidence="1">
    <location>
        <position position="554"/>
    </location>
    <ligand>
        <name>ATP</name>
        <dbReference type="ChEBI" id="CHEBI:30616"/>
    </ligand>
</feature>
<reference key="1">
    <citation type="journal article" date="2008" name="Genome Biol.">
        <title>The complete genome, comparative and functional analysis of Stenotrophomonas maltophilia reveals an organism heavily shielded by drug resistance determinants.</title>
        <authorList>
            <person name="Crossman L.C."/>
            <person name="Gould V.C."/>
            <person name="Dow J.M."/>
            <person name="Vernikos G.S."/>
            <person name="Okazaki A."/>
            <person name="Sebaihia M."/>
            <person name="Saunders D."/>
            <person name="Arrowsmith C."/>
            <person name="Carver T."/>
            <person name="Peters N."/>
            <person name="Adlem E."/>
            <person name="Kerhornou A."/>
            <person name="Lord A."/>
            <person name="Murphy L."/>
            <person name="Seeger K."/>
            <person name="Squares R."/>
            <person name="Rutter S."/>
            <person name="Quail M.A."/>
            <person name="Rajandream M.A."/>
            <person name="Harris D."/>
            <person name="Churcher C."/>
            <person name="Bentley S.D."/>
            <person name="Parkhill J."/>
            <person name="Thomson N.R."/>
            <person name="Avison M.B."/>
        </authorList>
    </citation>
    <scope>NUCLEOTIDE SEQUENCE [LARGE SCALE GENOMIC DNA]</scope>
    <source>
        <strain>K279a</strain>
    </source>
</reference>
<accession>B2FMS2</accession>
<evidence type="ECO:0000255" key="1">
    <source>
        <dbReference type="HAMAP-Rule" id="MF_02004"/>
    </source>
</evidence>
<name>SYV_STRMK</name>
<proteinExistence type="inferred from homology"/>
<keyword id="KW-0030">Aminoacyl-tRNA synthetase</keyword>
<keyword id="KW-0067">ATP-binding</keyword>
<keyword id="KW-0175">Coiled coil</keyword>
<keyword id="KW-0963">Cytoplasm</keyword>
<keyword id="KW-0436">Ligase</keyword>
<keyword id="KW-0547">Nucleotide-binding</keyword>
<keyword id="KW-0648">Protein biosynthesis</keyword>
<keyword id="KW-1185">Reference proteome</keyword>
<gene>
    <name evidence="1" type="primary">valS</name>
    <name type="ordered locus">Smlt0673</name>
</gene>
<sequence length="942" mass="106207">MTQLASSYDPKSFETDLYEAWEKAGHFKPSGTGEPYTILLPPPNVTGTLHMGHAFQQTLMDALVRYHRMRGYDTLWQVGTDHAGIATEMVVSRNLALEGKGETRDSLGREGFIGKVWEWKQQSGDTIERQMRRLGTSADWSRSTFTMDPQPSAAVNEAFVRWYEQGLIYRGQRLVNWDPVLKTAISDLEVESAEEDGFLWSIAYTLDEGLSYEHVERDADGVETLRETRDYLVVATTRPETLLGDTAVMVHPEDKRYAHLIGKSVVLPLTGRRVPVIADDYVDRAFGTGVVKVTPAHDFNDYEVGVRHSLPMINLFTPVAALNENAPERFQGLDRYAARKAVLAELEDLGILVETKAHKLQVPRGDRTGQVIEPYLTDQWFVKMDDLAKRGLELVEDGSISFVPPNWINTYRHWMNNIQDWCISRQLWWGHRIPAWFDEATGSCYVGRSEEEVRAKHNLGSDVVLNQESDVLETWFSSQLWPFSTLGWPNEQAMAERGFDRYLPSSVLITGFDIIFFWVARMIMATDNLVGKIPFKDVYFTGLIRDGQGQKMSKSKGNVLDPLDIIDGITIDDLVAKRTGGLMQPKMVEKIEKATRKEFPDGIAAHGADALRFTIAALATHGRDIKFDMNRAEGYKNFCNKLWNASRFALMNTEGAAFTGVPRPRTDAERWILARLAATTAEAQGHFAAYRFDLLAQCLYEFAWNAFCDWFLELSKPALNGADAADAESTRHTLLYVLEALLRLLHPLTPFITEQLWQQLAPRLGLAETTLSLRPYPTAAEFEGDFAQAEADVEWLKAVISAVRRVRSELNVAPSKLVPLRLQAGLEQDRVRIERFSASLSFLLKLDSIQWLAEGESAPPAAAAIVGELKLLVPLEGLVDLDAERVRLDKEIARVEAEKEKSETKLAKFTDKVPPAVVEQERVRLADWNTQLAGLREQRAKL</sequence>
<protein>
    <recommendedName>
        <fullName evidence="1">Valine--tRNA ligase</fullName>
        <ecNumber evidence="1">6.1.1.9</ecNumber>
    </recommendedName>
    <alternativeName>
        <fullName evidence="1">Valyl-tRNA synthetase</fullName>
        <shortName evidence="1">ValRS</shortName>
    </alternativeName>
</protein>
<dbReference type="EC" id="6.1.1.9" evidence="1"/>
<dbReference type="EMBL" id="AM743169">
    <property type="protein sequence ID" value="CAQ44255.1"/>
    <property type="molecule type" value="Genomic_DNA"/>
</dbReference>
<dbReference type="RefSeq" id="WP_012479102.1">
    <property type="nucleotide sequence ID" value="NC_010943.1"/>
</dbReference>
<dbReference type="SMR" id="B2FMS2"/>
<dbReference type="EnsemblBacteria" id="CAQ44255">
    <property type="protein sequence ID" value="CAQ44255"/>
    <property type="gene ID" value="Smlt0673"/>
</dbReference>
<dbReference type="KEGG" id="sml:Smlt0673"/>
<dbReference type="PATRIC" id="fig|522373.3.peg.643"/>
<dbReference type="eggNOG" id="COG0525">
    <property type="taxonomic scope" value="Bacteria"/>
</dbReference>
<dbReference type="HOGENOM" id="CLU_001493_0_2_6"/>
<dbReference type="Proteomes" id="UP000008840">
    <property type="component" value="Chromosome"/>
</dbReference>
<dbReference type="GO" id="GO:0005829">
    <property type="term" value="C:cytosol"/>
    <property type="evidence" value="ECO:0007669"/>
    <property type="project" value="TreeGrafter"/>
</dbReference>
<dbReference type="GO" id="GO:0002161">
    <property type="term" value="F:aminoacyl-tRNA deacylase activity"/>
    <property type="evidence" value="ECO:0007669"/>
    <property type="project" value="InterPro"/>
</dbReference>
<dbReference type="GO" id="GO:0005524">
    <property type="term" value="F:ATP binding"/>
    <property type="evidence" value="ECO:0007669"/>
    <property type="project" value="UniProtKB-UniRule"/>
</dbReference>
<dbReference type="GO" id="GO:0004832">
    <property type="term" value="F:valine-tRNA ligase activity"/>
    <property type="evidence" value="ECO:0007669"/>
    <property type="project" value="UniProtKB-UniRule"/>
</dbReference>
<dbReference type="GO" id="GO:0006438">
    <property type="term" value="P:valyl-tRNA aminoacylation"/>
    <property type="evidence" value="ECO:0007669"/>
    <property type="project" value="UniProtKB-UniRule"/>
</dbReference>
<dbReference type="CDD" id="cd07962">
    <property type="entry name" value="Anticodon_Ia_Val"/>
    <property type="match status" value="1"/>
</dbReference>
<dbReference type="CDD" id="cd00817">
    <property type="entry name" value="ValRS_core"/>
    <property type="match status" value="1"/>
</dbReference>
<dbReference type="FunFam" id="1.10.287.380:FF:000001">
    <property type="entry name" value="Valine--tRNA ligase"/>
    <property type="match status" value="1"/>
</dbReference>
<dbReference type="FunFam" id="3.40.50.620:FF:000032">
    <property type="entry name" value="Valine--tRNA ligase"/>
    <property type="match status" value="1"/>
</dbReference>
<dbReference type="FunFam" id="3.40.50.620:FF:000098">
    <property type="entry name" value="Valine--tRNA ligase"/>
    <property type="match status" value="1"/>
</dbReference>
<dbReference type="FunFam" id="3.90.740.10:FF:000015">
    <property type="entry name" value="Valine--tRNA ligase"/>
    <property type="match status" value="1"/>
</dbReference>
<dbReference type="Gene3D" id="3.40.50.620">
    <property type="entry name" value="HUPs"/>
    <property type="match status" value="2"/>
</dbReference>
<dbReference type="Gene3D" id="1.10.730.10">
    <property type="entry name" value="Isoleucyl-tRNA Synthetase, Domain 1"/>
    <property type="match status" value="1"/>
</dbReference>
<dbReference type="Gene3D" id="1.10.287.380">
    <property type="entry name" value="Valyl-tRNA synthetase, C-terminal domain"/>
    <property type="match status" value="1"/>
</dbReference>
<dbReference type="Gene3D" id="3.90.740.10">
    <property type="entry name" value="Valyl/Leucyl/Isoleucyl-tRNA synthetase, editing domain"/>
    <property type="match status" value="2"/>
</dbReference>
<dbReference type="HAMAP" id="MF_02004">
    <property type="entry name" value="Val_tRNA_synth_type1"/>
    <property type="match status" value="1"/>
</dbReference>
<dbReference type="InterPro" id="IPR001412">
    <property type="entry name" value="aa-tRNA-synth_I_CS"/>
</dbReference>
<dbReference type="InterPro" id="IPR002300">
    <property type="entry name" value="aa-tRNA-synth_Ia"/>
</dbReference>
<dbReference type="InterPro" id="IPR033705">
    <property type="entry name" value="Anticodon_Ia_Val"/>
</dbReference>
<dbReference type="InterPro" id="IPR013155">
    <property type="entry name" value="M/V/L/I-tRNA-synth_anticd-bd"/>
</dbReference>
<dbReference type="InterPro" id="IPR014729">
    <property type="entry name" value="Rossmann-like_a/b/a_fold"/>
</dbReference>
<dbReference type="InterPro" id="IPR010978">
    <property type="entry name" value="tRNA-bd_arm"/>
</dbReference>
<dbReference type="InterPro" id="IPR009080">
    <property type="entry name" value="tRNAsynth_Ia_anticodon-bd"/>
</dbReference>
<dbReference type="InterPro" id="IPR037118">
    <property type="entry name" value="Val-tRNA_synth_C_sf"/>
</dbReference>
<dbReference type="InterPro" id="IPR019499">
    <property type="entry name" value="Val-tRNA_synth_tRNA-bd"/>
</dbReference>
<dbReference type="InterPro" id="IPR009008">
    <property type="entry name" value="Val/Leu/Ile-tRNA-synth_edit"/>
</dbReference>
<dbReference type="InterPro" id="IPR002303">
    <property type="entry name" value="Valyl-tRNA_ligase"/>
</dbReference>
<dbReference type="NCBIfam" id="NF004349">
    <property type="entry name" value="PRK05729.1"/>
    <property type="match status" value="1"/>
</dbReference>
<dbReference type="NCBIfam" id="TIGR00422">
    <property type="entry name" value="valS"/>
    <property type="match status" value="1"/>
</dbReference>
<dbReference type="PANTHER" id="PTHR11946:SF93">
    <property type="entry name" value="VALINE--TRNA LIGASE, CHLOROPLASTIC_MITOCHONDRIAL 2"/>
    <property type="match status" value="1"/>
</dbReference>
<dbReference type="PANTHER" id="PTHR11946">
    <property type="entry name" value="VALYL-TRNA SYNTHETASES"/>
    <property type="match status" value="1"/>
</dbReference>
<dbReference type="Pfam" id="PF08264">
    <property type="entry name" value="Anticodon_1"/>
    <property type="match status" value="1"/>
</dbReference>
<dbReference type="Pfam" id="PF00133">
    <property type="entry name" value="tRNA-synt_1"/>
    <property type="match status" value="1"/>
</dbReference>
<dbReference type="Pfam" id="PF10458">
    <property type="entry name" value="Val_tRNA-synt_C"/>
    <property type="match status" value="1"/>
</dbReference>
<dbReference type="PRINTS" id="PR00986">
    <property type="entry name" value="TRNASYNTHVAL"/>
</dbReference>
<dbReference type="SUPFAM" id="SSF47323">
    <property type="entry name" value="Anticodon-binding domain of a subclass of class I aminoacyl-tRNA synthetases"/>
    <property type="match status" value="1"/>
</dbReference>
<dbReference type="SUPFAM" id="SSF52374">
    <property type="entry name" value="Nucleotidylyl transferase"/>
    <property type="match status" value="1"/>
</dbReference>
<dbReference type="SUPFAM" id="SSF46589">
    <property type="entry name" value="tRNA-binding arm"/>
    <property type="match status" value="1"/>
</dbReference>
<dbReference type="SUPFAM" id="SSF50677">
    <property type="entry name" value="ValRS/IleRS/LeuRS editing domain"/>
    <property type="match status" value="1"/>
</dbReference>
<dbReference type="PROSITE" id="PS00178">
    <property type="entry name" value="AA_TRNA_LIGASE_I"/>
    <property type="match status" value="1"/>
</dbReference>
<comment type="function">
    <text evidence="1">Catalyzes the attachment of valine to tRNA(Val). As ValRS can inadvertently accommodate and process structurally similar amino acids such as threonine, to avoid such errors, it has a 'posttransfer' editing activity that hydrolyzes mischarged Thr-tRNA(Val) in a tRNA-dependent manner.</text>
</comment>
<comment type="catalytic activity">
    <reaction evidence="1">
        <text>tRNA(Val) + L-valine + ATP = L-valyl-tRNA(Val) + AMP + diphosphate</text>
        <dbReference type="Rhea" id="RHEA:10704"/>
        <dbReference type="Rhea" id="RHEA-COMP:9672"/>
        <dbReference type="Rhea" id="RHEA-COMP:9708"/>
        <dbReference type="ChEBI" id="CHEBI:30616"/>
        <dbReference type="ChEBI" id="CHEBI:33019"/>
        <dbReference type="ChEBI" id="CHEBI:57762"/>
        <dbReference type="ChEBI" id="CHEBI:78442"/>
        <dbReference type="ChEBI" id="CHEBI:78537"/>
        <dbReference type="ChEBI" id="CHEBI:456215"/>
        <dbReference type="EC" id="6.1.1.9"/>
    </reaction>
</comment>
<comment type="subunit">
    <text evidence="1">Monomer.</text>
</comment>
<comment type="subcellular location">
    <subcellularLocation>
        <location evidence="1">Cytoplasm</location>
    </subcellularLocation>
</comment>
<comment type="domain">
    <text evidence="1">ValRS has two distinct active sites: one for aminoacylation and one for editing. The misactivated threonine is translocated from the active site to the editing site.</text>
</comment>
<comment type="domain">
    <text evidence="1">The C-terminal coiled-coil domain is crucial for aminoacylation activity.</text>
</comment>
<comment type="similarity">
    <text evidence="1">Belongs to the class-I aminoacyl-tRNA synthetase family. ValS type 1 subfamily.</text>
</comment>